<dbReference type="EMBL" id="D00497">
    <property type="protein sequence ID" value="BAA00389.1"/>
    <property type="molecule type" value="Genomic_DNA"/>
</dbReference>
<dbReference type="EMBL" id="AB010947">
    <property type="protein sequence ID" value="BAA36397.1"/>
    <property type="molecule type" value="Genomic_DNA"/>
</dbReference>
<dbReference type="EMBL" id="AE006468">
    <property type="protein sequence ID" value="AAL20868.1"/>
    <property type="molecule type" value="Genomic_DNA"/>
</dbReference>
<dbReference type="EMBL" id="Z67749">
    <property type="protein sequence ID" value="CAA91563.1"/>
    <property type="molecule type" value="Genomic_DNA"/>
</dbReference>
<dbReference type="PIR" id="S11895">
    <property type="entry name" value="S11895"/>
</dbReference>
<dbReference type="RefSeq" id="NP_460909.1">
    <property type="nucleotide sequence ID" value="NC_003197.2"/>
</dbReference>
<dbReference type="RefSeq" id="WP_001087453.1">
    <property type="nucleotide sequence ID" value="NC_003197.2"/>
</dbReference>
<dbReference type="SMR" id="P0A2E8"/>
<dbReference type="IntAct" id="P0A2E8">
    <property type="interactions" value="1"/>
</dbReference>
<dbReference type="STRING" id="99287.STM1956"/>
<dbReference type="PaxDb" id="99287-STM1956"/>
<dbReference type="GeneID" id="1253477"/>
<dbReference type="KEGG" id="stm:STM1956"/>
<dbReference type="PATRIC" id="fig|99287.12.peg.2071"/>
<dbReference type="HOGENOM" id="CLU_014793_8_1_6"/>
<dbReference type="OMA" id="LMMENRM"/>
<dbReference type="PhylomeDB" id="P0A2E8"/>
<dbReference type="BioCyc" id="SENT99287:STM1956-MONOMER"/>
<dbReference type="Proteomes" id="UP000001014">
    <property type="component" value="Chromosome"/>
</dbReference>
<dbReference type="GO" id="GO:0005737">
    <property type="term" value="C:cytoplasm"/>
    <property type="evidence" value="ECO:0007669"/>
    <property type="project" value="UniProtKB-SubCell"/>
</dbReference>
<dbReference type="GO" id="GO:0003677">
    <property type="term" value="F:DNA binding"/>
    <property type="evidence" value="ECO:0007669"/>
    <property type="project" value="UniProtKB-UniRule"/>
</dbReference>
<dbReference type="GO" id="GO:0003899">
    <property type="term" value="F:DNA-directed RNA polymerase activity"/>
    <property type="evidence" value="ECO:0007669"/>
    <property type="project" value="InterPro"/>
</dbReference>
<dbReference type="GO" id="GO:0016987">
    <property type="term" value="F:sigma factor activity"/>
    <property type="evidence" value="ECO:0000318"/>
    <property type="project" value="GO_Central"/>
</dbReference>
<dbReference type="GO" id="GO:0006352">
    <property type="term" value="P:DNA-templated transcription initiation"/>
    <property type="evidence" value="ECO:0007669"/>
    <property type="project" value="UniProtKB-UniRule"/>
</dbReference>
<dbReference type="GO" id="GO:0006355">
    <property type="term" value="P:regulation of DNA-templated transcription"/>
    <property type="evidence" value="ECO:0000318"/>
    <property type="project" value="GO_Central"/>
</dbReference>
<dbReference type="CDD" id="cd06171">
    <property type="entry name" value="Sigma70_r4"/>
    <property type="match status" value="1"/>
</dbReference>
<dbReference type="FunFam" id="1.10.1740.10:FF:000002">
    <property type="entry name" value="RNA polymerase sigma factor FliA"/>
    <property type="match status" value="1"/>
</dbReference>
<dbReference type="FunFam" id="1.20.140.160:FF:000001">
    <property type="entry name" value="RNA polymerase sigma factor FliA"/>
    <property type="match status" value="1"/>
</dbReference>
<dbReference type="Gene3D" id="1.10.1740.10">
    <property type="match status" value="1"/>
</dbReference>
<dbReference type="Gene3D" id="1.20.140.160">
    <property type="match status" value="1"/>
</dbReference>
<dbReference type="HAMAP" id="MF_00962">
    <property type="entry name" value="Sigma70_FliA"/>
    <property type="match status" value="1"/>
</dbReference>
<dbReference type="InterPro" id="IPR014284">
    <property type="entry name" value="RNA_pol_sigma-70_dom"/>
</dbReference>
<dbReference type="InterPro" id="IPR000943">
    <property type="entry name" value="RNA_pol_sigma70"/>
</dbReference>
<dbReference type="InterPro" id="IPR007627">
    <property type="entry name" value="RNA_pol_sigma70_r2"/>
</dbReference>
<dbReference type="InterPro" id="IPR007624">
    <property type="entry name" value="RNA_pol_sigma70_r3"/>
</dbReference>
<dbReference type="InterPro" id="IPR007630">
    <property type="entry name" value="RNA_pol_sigma70_r4"/>
</dbReference>
<dbReference type="InterPro" id="IPR012845">
    <property type="entry name" value="RNA_pol_sigma_FliA_WhiG"/>
</dbReference>
<dbReference type="InterPro" id="IPR013325">
    <property type="entry name" value="RNA_pol_sigma_r2"/>
</dbReference>
<dbReference type="InterPro" id="IPR013324">
    <property type="entry name" value="RNA_pol_sigma_r3/r4-like"/>
</dbReference>
<dbReference type="InterPro" id="IPR028617">
    <property type="entry name" value="Sigma70_FliA"/>
</dbReference>
<dbReference type="NCBIfam" id="TIGR02479">
    <property type="entry name" value="FliA_WhiG"/>
    <property type="match status" value="1"/>
</dbReference>
<dbReference type="NCBIfam" id="NF005413">
    <property type="entry name" value="PRK06986.1"/>
    <property type="match status" value="1"/>
</dbReference>
<dbReference type="NCBIfam" id="TIGR02937">
    <property type="entry name" value="sigma70-ECF"/>
    <property type="match status" value="1"/>
</dbReference>
<dbReference type="PANTHER" id="PTHR30385:SF7">
    <property type="entry name" value="RNA POLYMERASE SIGMA FACTOR FLIA"/>
    <property type="match status" value="1"/>
</dbReference>
<dbReference type="PANTHER" id="PTHR30385">
    <property type="entry name" value="SIGMA FACTOR F FLAGELLAR"/>
    <property type="match status" value="1"/>
</dbReference>
<dbReference type="Pfam" id="PF04542">
    <property type="entry name" value="Sigma70_r2"/>
    <property type="match status" value="1"/>
</dbReference>
<dbReference type="Pfam" id="PF04539">
    <property type="entry name" value="Sigma70_r3"/>
    <property type="match status" value="1"/>
</dbReference>
<dbReference type="Pfam" id="PF04545">
    <property type="entry name" value="Sigma70_r4"/>
    <property type="match status" value="1"/>
</dbReference>
<dbReference type="PIRSF" id="PIRSF000770">
    <property type="entry name" value="RNA_pol_sigma-SigE/K"/>
    <property type="match status" value="1"/>
</dbReference>
<dbReference type="PRINTS" id="PR00046">
    <property type="entry name" value="SIGMA70FCT"/>
</dbReference>
<dbReference type="SUPFAM" id="SSF88946">
    <property type="entry name" value="Sigma2 domain of RNA polymerase sigma factors"/>
    <property type="match status" value="1"/>
</dbReference>
<dbReference type="SUPFAM" id="SSF88659">
    <property type="entry name" value="Sigma3 and sigma4 domains of RNA polymerase sigma factors"/>
    <property type="match status" value="2"/>
</dbReference>
<dbReference type="PROSITE" id="PS00715">
    <property type="entry name" value="SIGMA70_1"/>
    <property type="match status" value="1"/>
</dbReference>
<dbReference type="PROSITE" id="PS00716">
    <property type="entry name" value="SIGMA70_2"/>
    <property type="match status" value="1"/>
</dbReference>
<feature type="chain" id="PRO_0000093985" description="RNA polymerase sigma factor FliA">
    <location>
        <begin position="1"/>
        <end position="239"/>
    </location>
</feature>
<feature type="DNA-binding region" description="H-T-H motif" evidence="1">
    <location>
        <begin position="207"/>
        <end position="226"/>
    </location>
</feature>
<feature type="region of interest" description="Sigma-70 factor domain-2" evidence="1">
    <location>
        <begin position="16"/>
        <end position="88"/>
    </location>
</feature>
<feature type="region of interest" description="Sigma-70 factor domain-3" evidence="1">
    <location>
        <begin position="96"/>
        <end position="166"/>
    </location>
</feature>
<feature type="region of interest" description="Sigma-70 factor domain-4" evidence="1">
    <location>
        <begin position="185"/>
        <end position="233"/>
    </location>
</feature>
<feature type="short sequence motif" description="Interaction with polymerase core subunit RpoC">
    <location>
        <begin position="43"/>
        <end position="46"/>
    </location>
</feature>
<organism>
    <name type="scientific">Salmonella typhimurium (strain LT2 / SGSC1412 / ATCC 700720)</name>
    <dbReference type="NCBI Taxonomy" id="99287"/>
    <lineage>
        <taxon>Bacteria</taxon>
        <taxon>Pseudomonadati</taxon>
        <taxon>Pseudomonadota</taxon>
        <taxon>Gammaproteobacteria</taxon>
        <taxon>Enterobacterales</taxon>
        <taxon>Enterobacteriaceae</taxon>
        <taxon>Salmonella</taxon>
    </lineage>
</organism>
<name>FLIA_SALTY</name>
<comment type="function">
    <text evidence="1 2">Sigma factors are initiation factors that promote the attachment of RNA polymerase to specific initiation sites and are then released. This sigma factor controls the expression of flagella-related genes. May regulate the expression of genes involved in virulence.</text>
</comment>
<comment type="interaction">
    <interactant intactId="EBI-10687707">
        <id>P0A2E8</id>
    </interactant>
    <interactant intactId="EBI-10687647">
        <id>P26477</id>
        <label>flgM</label>
    </interactant>
    <organismsDiffer>false</organismsDiffer>
    <experiments>4</experiments>
</comment>
<comment type="subcellular location">
    <subcellularLocation>
        <location evidence="1">Cytoplasm</location>
    </subcellularLocation>
</comment>
<comment type="similarity">
    <text evidence="1">Belongs to the sigma-70 factor family. FliA subfamily.</text>
</comment>
<accession>P0A2E8</accession>
<accession>P17168</accession>
<accession>P74844</accession>
<sequence length="239" mass="27473">MNSLYTAEGVMDKHSLWQRYVPLVRHEALRLQVRLPASVELDDLLQAGGIGLLNAVDRYDALQGTAFTTYAVQRIRGAMLDELRSRDWVPRSVRRNAREVAQAMGQLEQELGRNATETEVAERLGIPVAEYRQMLLDTNNSQLFSYDEWREEHGDSIELVTEEHQQENPLHQLLEGDLRQRVMDAIESLPEREQLVLTLYYQEELNLKEIGAVLEVGESRVSQLHSQAIKRLRTKLGKL</sequence>
<protein>
    <recommendedName>
        <fullName evidence="1">RNA polymerase sigma factor FliA</fullName>
    </recommendedName>
    <alternativeName>
        <fullName evidence="1">RNA polymerase sigma factor for flagellar operon</fullName>
    </alternativeName>
    <alternativeName>
        <fullName evidence="1">Sigma F</fullName>
    </alternativeName>
    <alternativeName>
        <fullName evidence="1">Sigma-28</fullName>
    </alternativeName>
</protein>
<gene>
    <name evidence="1" type="primary">fliA</name>
    <name type="ordered locus">STM1956</name>
</gene>
<proteinExistence type="evidence at protein level"/>
<evidence type="ECO:0000255" key="1">
    <source>
        <dbReference type="HAMAP-Rule" id="MF_00962"/>
    </source>
</evidence>
<evidence type="ECO:0000269" key="2">
    <source>
    </source>
</evidence>
<keyword id="KW-0963">Cytoplasm</keyword>
<keyword id="KW-0903">Direct protein sequencing</keyword>
<keyword id="KW-0238">DNA-binding</keyword>
<keyword id="KW-1185">Reference proteome</keyword>
<keyword id="KW-0731">Sigma factor</keyword>
<keyword id="KW-0804">Transcription</keyword>
<keyword id="KW-0805">Transcription regulation</keyword>
<keyword id="KW-0843">Virulence</keyword>
<reference key="1">
    <citation type="journal article" date="1990" name="Mol. Gen. Genet.">
        <title>Gene fliA encodes an alternative sigma factor specific for flagellar operons in Salmonella typhimurium.</title>
        <authorList>
            <person name="Ohnishi K."/>
            <person name="Kutsukake K."/>
            <person name="Suzuki H."/>
            <person name="Iino T."/>
        </authorList>
    </citation>
    <scope>NUCLEOTIDE SEQUENCE [GENOMIC DNA]</scope>
    <scope>PROTEIN SEQUENCE OF 1-14</scope>
    <scope>FUNCTION</scope>
</reference>
<reference key="2">
    <citation type="journal article" date="1999" name="Microbiology">
        <title>Structure and expression of the fliA operon of Salmonella typhimurium.</title>
        <authorList>
            <person name="Ikebe T."/>
            <person name="Iyoda S."/>
            <person name="Kutsukake K."/>
        </authorList>
    </citation>
    <scope>NUCLEOTIDE SEQUENCE [GENOMIC DNA]</scope>
    <source>
        <strain>KK1004</strain>
    </source>
</reference>
<reference key="3">
    <citation type="journal article" date="2001" name="Nature">
        <title>Complete genome sequence of Salmonella enterica serovar Typhimurium LT2.</title>
        <authorList>
            <person name="McClelland M."/>
            <person name="Sanderson K.E."/>
            <person name="Spieth J."/>
            <person name="Clifton S.W."/>
            <person name="Latreille P."/>
            <person name="Courtney L."/>
            <person name="Porwollik S."/>
            <person name="Ali J."/>
            <person name="Dante M."/>
            <person name="Du F."/>
            <person name="Hou S."/>
            <person name="Layman D."/>
            <person name="Leonard S."/>
            <person name="Nguyen C."/>
            <person name="Scott K."/>
            <person name="Holmes A."/>
            <person name="Grewal N."/>
            <person name="Mulvaney E."/>
            <person name="Ryan E."/>
            <person name="Sun H."/>
            <person name="Florea L."/>
            <person name="Miller W."/>
            <person name="Stoneking T."/>
            <person name="Nhan M."/>
            <person name="Waterston R."/>
            <person name="Wilson R.K."/>
        </authorList>
    </citation>
    <scope>NUCLEOTIDE SEQUENCE [LARGE SCALE GENOMIC DNA]</scope>
    <source>
        <strain>LT2 / SGSC1412 / ATCC 700720</strain>
    </source>
</reference>
<reference key="4">
    <citation type="journal article" date="1997" name="Microbiology">
        <title>The flagellin N-methylase gene fliB and an adjacent serovar-specific IS200 element in Salmonella typhimurium.</title>
        <authorList>
            <person name="Burnens A.P."/>
            <person name="Stanley J."/>
            <person name="Sack R."/>
            <person name="Hunziker P."/>
            <person name="Brodard I."/>
            <person name="Nicolet J."/>
        </authorList>
    </citation>
    <scope>NUCLEOTIDE SEQUENCE [GENOMIC DNA] OF 1-13</scope>
    <source>
        <strain>168-94</strain>
    </source>
</reference>